<accession>Q51788</accession>
<proteinExistence type="inferred from homology"/>
<protein>
    <recommendedName>
        <fullName>Phenazine biosynthesis protein PhzB</fullName>
    </recommendedName>
</protein>
<keyword id="KW-0045">Antibiotic biosynthesis</keyword>
<keyword id="KW-0843">Virulence</keyword>
<name>PHZB_PSEFL</name>
<gene>
    <name type="primary">phzB</name>
</gene>
<dbReference type="EMBL" id="L48616">
    <property type="protein sequence ID" value="AAC18901.1"/>
    <property type="molecule type" value="Genomic_DNA"/>
</dbReference>
<dbReference type="RefSeq" id="WP_043050171.1">
    <property type="nucleotide sequence ID" value="NZ_JXCQ01000041.1"/>
</dbReference>
<dbReference type="SMR" id="Q51788"/>
<dbReference type="GO" id="GO:0017000">
    <property type="term" value="P:antibiotic biosynthetic process"/>
    <property type="evidence" value="ECO:0007669"/>
    <property type="project" value="UniProtKB-KW"/>
</dbReference>
<dbReference type="Gene3D" id="3.10.450.50">
    <property type="match status" value="1"/>
</dbReference>
<dbReference type="InterPro" id="IPR032710">
    <property type="entry name" value="NTF2-like_dom_sf"/>
</dbReference>
<dbReference type="InterPro" id="IPR004964">
    <property type="entry name" value="PhzA_PhzB"/>
</dbReference>
<dbReference type="Pfam" id="PF03284">
    <property type="entry name" value="PHZA_PHZB"/>
    <property type="match status" value="1"/>
</dbReference>
<dbReference type="SUPFAM" id="SSF54427">
    <property type="entry name" value="NTF2-like"/>
    <property type="match status" value="1"/>
</dbReference>
<evidence type="ECO:0000305" key="1"/>
<reference key="1">
    <citation type="journal article" date="1998" name="J. Bacteriol.">
        <title>A seven-gene locus for synthesis of phenazine-1-carboxylic acid by Pseudomonas fluorescens 2-79.</title>
        <authorList>
            <person name="Mavrodi D.V."/>
            <person name="Ksenzenko V.N."/>
            <person name="Bonsall R.F."/>
            <person name="Cook R.J."/>
            <person name="Boronin A.M."/>
            <person name="Thomashow L.S."/>
        </authorList>
    </citation>
    <scope>NUCLEOTIDE SEQUENCE [GENOMIC DNA]</scope>
    <source>
        <strain>NRRL B-15132 / 2-79</strain>
    </source>
</reference>
<organism>
    <name type="scientific">Pseudomonas fluorescens</name>
    <dbReference type="NCBI Taxonomy" id="294"/>
    <lineage>
        <taxon>Bacteria</taxon>
        <taxon>Pseudomonadati</taxon>
        <taxon>Pseudomonadota</taxon>
        <taxon>Gammaproteobacteria</taxon>
        <taxon>Pseudomonadales</taxon>
        <taxon>Pseudomonadaceae</taxon>
        <taxon>Pseudomonas</taxon>
    </lineage>
</organism>
<sequence length="162" mass="18826">MPDSTVQQPITDDTELRRKNRATVEQYMRTKGQDRLRRHELFTEDGSGGLWTTDTGAPIVISGKAKLAEHAVWSLKCFPDWEWYNVKVFETDDPNHIWVECDGHGKILFPGYPEGYYENHFLHSFELQDGKVKRNREFMNVFQQLRALGIPVPHIKREGIPA</sequence>
<feature type="chain" id="PRO_0000058420" description="Phenazine biosynthesis protein PhzB">
    <location>
        <begin position="1"/>
        <end position="162"/>
    </location>
</feature>
<comment type="function">
    <text>Involved in the biosynthesis of the antibiotic, phenazine, a nitrogen-containing heterocyclic molecule having important roles in virulence, competition and biological control.</text>
</comment>
<comment type="similarity">
    <text evidence="1">Belongs to the PhzA/PhzB family.</text>
</comment>